<dbReference type="PIR" id="S03399">
    <property type="entry name" value="S03399"/>
</dbReference>
<dbReference type="SMR" id="P14520"/>
<dbReference type="STRING" id="8005.ENSEEEP00000002747"/>
<dbReference type="iPTMnet" id="P14520"/>
<dbReference type="Proteomes" id="UP000314983">
    <property type="component" value="Unassembled WGS sequence"/>
</dbReference>
<dbReference type="GO" id="GO:0072562">
    <property type="term" value="C:blood microparticle"/>
    <property type="evidence" value="ECO:0007669"/>
    <property type="project" value="TreeGrafter"/>
</dbReference>
<dbReference type="GO" id="GO:0031838">
    <property type="term" value="C:haptoglobin-hemoglobin complex"/>
    <property type="evidence" value="ECO:0007669"/>
    <property type="project" value="TreeGrafter"/>
</dbReference>
<dbReference type="GO" id="GO:0005833">
    <property type="term" value="C:hemoglobin complex"/>
    <property type="evidence" value="ECO:0007669"/>
    <property type="project" value="InterPro"/>
</dbReference>
<dbReference type="GO" id="GO:0031720">
    <property type="term" value="F:haptoglobin binding"/>
    <property type="evidence" value="ECO:0007669"/>
    <property type="project" value="TreeGrafter"/>
</dbReference>
<dbReference type="GO" id="GO:0020037">
    <property type="term" value="F:heme binding"/>
    <property type="evidence" value="ECO:0007669"/>
    <property type="project" value="InterPro"/>
</dbReference>
<dbReference type="GO" id="GO:0005506">
    <property type="term" value="F:iron ion binding"/>
    <property type="evidence" value="ECO:0007669"/>
    <property type="project" value="InterPro"/>
</dbReference>
<dbReference type="GO" id="GO:0043177">
    <property type="term" value="F:organic acid binding"/>
    <property type="evidence" value="ECO:0007669"/>
    <property type="project" value="TreeGrafter"/>
</dbReference>
<dbReference type="GO" id="GO:0019825">
    <property type="term" value="F:oxygen binding"/>
    <property type="evidence" value="ECO:0007669"/>
    <property type="project" value="InterPro"/>
</dbReference>
<dbReference type="GO" id="GO:0005344">
    <property type="term" value="F:oxygen carrier activity"/>
    <property type="evidence" value="ECO:0007669"/>
    <property type="project" value="UniProtKB-KW"/>
</dbReference>
<dbReference type="GO" id="GO:0004601">
    <property type="term" value="F:peroxidase activity"/>
    <property type="evidence" value="ECO:0007669"/>
    <property type="project" value="TreeGrafter"/>
</dbReference>
<dbReference type="GO" id="GO:0042744">
    <property type="term" value="P:hydrogen peroxide catabolic process"/>
    <property type="evidence" value="ECO:0007669"/>
    <property type="project" value="TreeGrafter"/>
</dbReference>
<dbReference type="CDD" id="cd08927">
    <property type="entry name" value="Hb-alpha-like"/>
    <property type="match status" value="1"/>
</dbReference>
<dbReference type="FunFam" id="1.10.490.10:FF:000002">
    <property type="entry name" value="Hemoglobin subunit alpha"/>
    <property type="match status" value="1"/>
</dbReference>
<dbReference type="Gene3D" id="1.10.490.10">
    <property type="entry name" value="Globins"/>
    <property type="match status" value="1"/>
</dbReference>
<dbReference type="InterPro" id="IPR000971">
    <property type="entry name" value="Globin"/>
</dbReference>
<dbReference type="InterPro" id="IPR009050">
    <property type="entry name" value="Globin-like_sf"/>
</dbReference>
<dbReference type="InterPro" id="IPR012292">
    <property type="entry name" value="Globin/Proto"/>
</dbReference>
<dbReference type="InterPro" id="IPR002338">
    <property type="entry name" value="Hemoglobin_a-typ"/>
</dbReference>
<dbReference type="InterPro" id="IPR050056">
    <property type="entry name" value="Hemoglobin_oxygen_transport"/>
</dbReference>
<dbReference type="InterPro" id="IPR002339">
    <property type="entry name" value="Hemoglobin_pi"/>
</dbReference>
<dbReference type="PANTHER" id="PTHR11442:SF93">
    <property type="entry name" value="ALPHA GLOBIN-LIKE-RELATED"/>
    <property type="match status" value="1"/>
</dbReference>
<dbReference type="PANTHER" id="PTHR11442">
    <property type="entry name" value="HEMOGLOBIN FAMILY MEMBER"/>
    <property type="match status" value="1"/>
</dbReference>
<dbReference type="Pfam" id="PF00042">
    <property type="entry name" value="Globin"/>
    <property type="match status" value="1"/>
</dbReference>
<dbReference type="PRINTS" id="PR00612">
    <property type="entry name" value="ALPHAHAEM"/>
</dbReference>
<dbReference type="PRINTS" id="PR00815">
    <property type="entry name" value="PIHAEM"/>
</dbReference>
<dbReference type="SUPFAM" id="SSF46458">
    <property type="entry name" value="Globin-like"/>
    <property type="match status" value="1"/>
</dbReference>
<dbReference type="PROSITE" id="PS01033">
    <property type="entry name" value="GLOBIN"/>
    <property type="match status" value="1"/>
</dbReference>
<protein>
    <recommendedName>
        <fullName>Hemoglobin subunit alpha</fullName>
    </recommendedName>
    <alternativeName>
        <fullName>Alpha-globin</fullName>
    </alternativeName>
    <alternativeName>
        <fullName>Hemoglobin alpha chain</fullName>
    </alternativeName>
</protein>
<comment type="function">
    <text>Involved in oxygen transport from gills to the various peripheral tissues.</text>
</comment>
<comment type="subunit">
    <text>Heterotetramer of two alpha chains and two beta chains.</text>
</comment>
<comment type="tissue specificity">
    <text>Red blood cells.</text>
</comment>
<comment type="similarity">
    <text evidence="1">Belongs to the globin family.</text>
</comment>
<organism>
    <name type="scientific">Electrophorus electricus</name>
    <name type="common">Electric eel</name>
    <name type="synonym">Gymnotus electricus</name>
    <dbReference type="NCBI Taxonomy" id="8005"/>
    <lineage>
        <taxon>Eukaryota</taxon>
        <taxon>Metazoa</taxon>
        <taxon>Chordata</taxon>
        <taxon>Craniata</taxon>
        <taxon>Vertebrata</taxon>
        <taxon>Euteleostomi</taxon>
        <taxon>Actinopterygii</taxon>
        <taxon>Neopterygii</taxon>
        <taxon>Teleostei</taxon>
        <taxon>Ostariophysi</taxon>
        <taxon>Gymnotiformes</taxon>
        <taxon>Gymnotoidei</taxon>
        <taxon>Gymnotidae</taxon>
        <taxon>Electrophorus</taxon>
    </lineage>
</organism>
<keyword id="KW-0007">Acetylation</keyword>
<keyword id="KW-0903">Direct protein sequencing</keyword>
<keyword id="KW-0349">Heme</keyword>
<keyword id="KW-0408">Iron</keyword>
<keyword id="KW-0479">Metal-binding</keyword>
<keyword id="KW-0561">Oxygen transport</keyword>
<keyword id="KW-1185">Reference proteome</keyword>
<keyword id="KW-0813">Transport</keyword>
<feature type="chain" id="PRO_0000052622" description="Hemoglobin subunit alpha">
    <location>
        <begin position="1"/>
        <end position="142"/>
    </location>
</feature>
<feature type="domain" description="Globin" evidence="1">
    <location>
        <begin position="1"/>
        <end position="142"/>
    </location>
</feature>
<feature type="binding site" evidence="1">
    <location>
        <position position="59"/>
    </location>
    <ligand>
        <name>O2</name>
        <dbReference type="ChEBI" id="CHEBI:15379"/>
    </ligand>
</feature>
<feature type="binding site" description="proximal binding residue" evidence="1">
    <location>
        <position position="88"/>
    </location>
    <ligand>
        <name>heme b</name>
        <dbReference type="ChEBI" id="CHEBI:60344"/>
    </ligand>
    <ligandPart>
        <name>Fe</name>
        <dbReference type="ChEBI" id="CHEBI:18248"/>
    </ligandPart>
</feature>
<feature type="modified residue" description="N-acetylserine" evidence="2">
    <location>
        <position position="1"/>
    </location>
</feature>
<gene>
    <name type="primary">hba</name>
</gene>
<accession>P14520</accession>
<name>HBA_ELEEL</name>
<sequence>SLTAKSKSIVKAFWGKIGSRADDIGAEAFGRMLTVYPETKTYFASWSDLSPGSAAVKKHGKTIMGGIAEAVGHIDDLTGGLASLSELHAFKLRVDPANFKILAHNLIVVLALFFPADFTPEVHMAVDKFFQNVASALSEKYR</sequence>
<evidence type="ECO:0000255" key="1">
    <source>
        <dbReference type="PROSITE-ProRule" id="PRU00238"/>
    </source>
</evidence>
<evidence type="ECO:0000269" key="2">
    <source>
    </source>
</evidence>
<proteinExistence type="evidence at protein level"/>
<reference key="1">
    <citation type="journal article" date="1989" name="Biol. Chem. Hoppe-Seyler">
        <title>The primary structure of the hemoglobin of the electric eel (Electrophorus electricus).</title>
        <authorList>
            <person name="Huber F."/>
            <person name="Braunitzer G."/>
        </authorList>
    </citation>
    <scope>PROTEIN SEQUENCE</scope>
    <scope>ACETYLATION AT SER-1</scope>
</reference>